<reference key="1">
    <citation type="journal article" date="2000" name="Nature">
        <title>Sequence and analysis of chromosome 3 of the plant Arabidopsis thaliana.</title>
        <authorList>
            <person name="Salanoubat M."/>
            <person name="Lemcke K."/>
            <person name="Rieger M."/>
            <person name="Ansorge W."/>
            <person name="Unseld M."/>
            <person name="Fartmann B."/>
            <person name="Valle G."/>
            <person name="Bloecker H."/>
            <person name="Perez-Alonso M."/>
            <person name="Obermaier B."/>
            <person name="Delseny M."/>
            <person name="Boutry M."/>
            <person name="Grivell L.A."/>
            <person name="Mache R."/>
            <person name="Puigdomenech P."/>
            <person name="De Simone V."/>
            <person name="Choisne N."/>
            <person name="Artiguenave F."/>
            <person name="Robert C."/>
            <person name="Brottier P."/>
            <person name="Wincker P."/>
            <person name="Cattolico L."/>
            <person name="Weissenbach J."/>
            <person name="Saurin W."/>
            <person name="Quetier F."/>
            <person name="Schaefer M."/>
            <person name="Mueller-Auer S."/>
            <person name="Gabel C."/>
            <person name="Fuchs M."/>
            <person name="Benes V."/>
            <person name="Wurmbach E."/>
            <person name="Drzonek H."/>
            <person name="Erfle H."/>
            <person name="Jordan N."/>
            <person name="Bangert S."/>
            <person name="Wiedelmann R."/>
            <person name="Kranz H."/>
            <person name="Voss H."/>
            <person name="Holland R."/>
            <person name="Brandt P."/>
            <person name="Nyakatura G."/>
            <person name="Vezzi A."/>
            <person name="D'Angelo M."/>
            <person name="Pallavicini A."/>
            <person name="Toppo S."/>
            <person name="Simionati B."/>
            <person name="Conrad A."/>
            <person name="Hornischer K."/>
            <person name="Kauer G."/>
            <person name="Loehnert T.-H."/>
            <person name="Nordsiek G."/>
            <person name="Reichelt J."/>
            <person name="Scharfe M."/>
            <person name="Schoen O."/>
            <person name="Bargues M."/>
            <person name="Terol J."/>
            <person name="Climent J."/>
            <person name="Navarro P."/>
            <person name="Collado C."/>
            <person name="Perez-Perez A."/>
            <person name="Ottenwaelder B."/>
            <person name="Duchemin D."/>
            <person name="Cooke R."/>
            <person name="Laudie M."/>
            <person name="Berger-Llauro C."/>
            <person name="Purnelle B."/>
            <person name="Masuy D."/>
            <person name="de Haan M."/>
            <person name="Maarse A.C."/>
            <person name="Alcaraz J.-P."/>
            <person name="Cottet A."/>
            <person name="Casacuberta E."/>
            <person name="Monfort A."/>
            <person name="Argiriou A."/>
            <person name="Flores M."/>
            <person name="Liguori R."/>
            <person name="Vitale D."/>
            <person name="Mannhaupt G."/>
            <person name="Haase D."/>
            <person name="Schoof H."/>
            <person name="Rudd S."/>
            <person name="Zaccaria P."/>
            <person name="Mewes H.-W."/>
            <person name="Mayer K.F.X."/>
            <person name="Kaul S."/>
            <person name="Town C.D."/>
            <person name="Koo H.L."/>
            <person name="Tallon L.J."/>
            <person name="Jenkins J."/>
            <person name="Rooney T."/>
            <person name="Rizzo M."/>
            <person name="Walts A."/>
            <person name="Utterback T."/>
            <person name="Fujii C.Y."/>
            <person name="Shea T.P."/>
            <person name="Creasy T.H."/>
            <person name="Haas B."/>
            <person name="Maiti R."/>
            <person name="Wu D."/>
            <person name="Peterson J."/>
            <person name="Van Aken S."/>
            <person name="Pai G."/>
            <person name="Militscher J."/>
            <person name="Sellers P."/>
            <person name="Gill J.E."/>
            <person name="Feldblyum T.V."/>
            <person name="Preuss D."/>
            <person name="Lin X."/>
            <person name="Nierman W.C."/>
            <person name="Salzberg S.L."/>
            <person name="White O."/>
            <person name="Venter J.C."/>
            <person name="Fraser C.M."/>
            <person name="Kaneko T."/>
            <person name="Nakamura Y."/>
            <person name="Sato S."/>
            <person name="Kato T."/>
            <person name="Asamizu E."/>
            <person name="Sasamoto S."/>
            <person name="Kimura T."/>
            <person name="Idesawa K."/>
            <person name="Kawashima K."/>
            <person name="Kishida Y."/>
            <person name="Kiyokawa C."/>
            <person name="Kohara M."/>
            <person name="Matsumoto M."/>
            <person name="Matsuno A."/>
            <person name="Muraki A."/>
            <person name="Nakayama S."/>
            <person name="Nakazaki N."/>
            <person name="Shinpo S."/>
            <person name="Takeuchi C."/>
            <person name="Wada T."/>
            <person name="Watanabe A."/>
            <person name="Yamada M."/>
            <person name="Yasuda M."/>
            <person name="Tabata S."/>
        </authorList>
    </citation>
    <scope>NUCLEOTIDE SEQUENCE [LARGE SCALE GENOMIC DNA]</scope>
    <source>
        <strain>cv. Columbia</strain>
    </source>
</reference>
<reference key="2">
    <citation type="journal article" date="2017" name="Plant J.">
        <title>Araport11: a complete reannotation of the Arabidopsis thaliana reference genome.</title>
        <authorList>
            <person name="Cheng C.Y."/>
            <person name="Krishnakumar V."/>
            <person name="Chan A.P."/>
            <person name="Thibaud-Nissen F."/>
            <person name="Schobel S."/>
            <person name="Town C.D."/>
        </authorList>
    </citation>
    <scope>GENOME REANNOTATION</scope>
    <source>
        <strain>cv. Columbia</strain>
    </source>
</reference>
<reference key="3">
    <citation type="journal article" date="2003" name="Science">
        <title>Empirical analysis of transcriptional activity in the Arabidopsis genome.</title>
        <authorList>
            <person name="Yamada K."/>
            <person name="Lim J."/>
            <person name="Dale J.M."/>
            <person name="Chen H."/>
            <person name="Shinn P."/>
            <person name="Palm C.J."/>
            <person name="Southwick A.M."/>
            <person name="Wu H.C."/>
            <person name="Kim C.J."/>
            <person name="Nguyen M."/>
            <person name="Pham P.K."/>
            <person name="Cheuk R.F."/>
            <person name="Karlin-Newmann G."/>
            <person name="Liu S.X."/>
            <person name="Lam B."/>
            <person name="Sakano H."/>
            <person name="Wu T."/>
            <person name="Yu G."/>
            <person name="Miranda M."/>
            <person name="Quach H.L."/>
            <person name="Tripp M."/>
            <person name="Chang C.H."/>
            <person name="Lee J.M."/>
            <person name="Toriumi M.J."/>
            <person name="Chan M.M."/>
            <person name="Tang C.C."/>
            <person name="Onodera C.S."/>
            <person name="Deng J.M."/>
            <person name="Akiyama K."/>
            <person name="Ansari Y."/>
            <person name="Arakawa T."/>
            <person name="Banh J."/>
            <person name="Banno F."/>
            <person name="Bowser L."/>
            <person name="Brooks S.Y."/>
            <person name="Carninci P."/>
            <person name="Chao Q."/>
            <person name="Choy N."/>
            <person name="Enju A."/>
            <person name="Goldsmith A.D."/>
            <person name="Gurjal M."/>
            <person name="Hansen N.F."/>
            <person name="Hayashizaki Y."/>
            <person name="Johnson-Hopson C."/>
            <person name="Hsuan V.W."/>
            <person name="Iida K."/>
            <person name="Karnes M."/>
            <person name="Khan S."/>
            <person name="Koesema E."/>
            <person name="Ishida J."/>
            <person name="Jiang P.X."/>
            <person name="Jones T."/>
            <person name="Kawai J."/>
            <person name="Kamiya A."/>
            <person name="Meyers C."/>
            <person name="Nakajima M."/>
            <person name="Narusaka M."/>
            <person name="Seki M."/>
            <person name="Sakurai T."/>
            <person name="Satou M."/>
            <person name="Tamse R."/>
            <person name="Vaysberg M."/>
            <person name="Wallender E.K."/>
            <person name="Wong C."/>
            <person name="Yamamura Y."/>
            <person name="Yuan S."/>
            <person name="Shinozaki K."/>
            <person name="Davis R.W."/>
            <person name="Theologis A."/>
            <person name="Ecker J.R."/>
        </authorList>
    </citation>
    <scope>NUCLEOTIDE SEQUENCE [LARGE SCALE MRNA] (ISOFORM 2)</scope>
    <source>
        <strain>cv. Columbia</strain>
    </source>
</reference>
<reference key="4">
    <citation type="journal article" date="2010" name="BMC Genomics">
        <title>Genome-wide cloning and sequence analysis of leucine-rich repeat receptor-like protein kinase genes in Arabidopsis thaliana.</title>
        <authorList>
            <person name="Gou X."/>
            <person name="He K."/>
            <person name="Yang H."/>
            <person name="Yuan T."/>
            <person name="Lin H."/>
            <person name="Clouse S.D."/>
            <person name="Li J."/>
        </authorList>
    </citation>
    <scope>NUCLEOTIDE SEQUENCE [LARGE SCALE MRNA] (ISOFORM 1)</scope>
    <source>
        <strain>cv. Columbia</strain>
    </source>
</reference>
<reference key="5">
    <citation type="submission" date="2002-03" db="EMBL/GenBank/DDBJ databases">
        <title>Full-length cDNA from Arabidopsis thaliana.</title>
        <authorList>
            <person name="Brover V.V."/>
            <person name="Troukhan M.E."/>
            <person name="Alexandrov N.A."/>
            <person name="Lu Y.-P."/>
            <person name="Flavell R.B."/>
            <person name="Feldmann K.A."/>
        </authorList>
    </citation>
    <scope>NUCLEOTIDE SEQUENCE [LARGE SCALE MRNA] (ISOFORM 1)</scope>
</reference>
<reference key="6">
    <citation type="journal article" date="2008" name="J. Mol. Evol.">
        <title>Local patterns of nucleotide polymorphism are highly variable in the selfing species Arabidopsis thaliana.</title>
        <authorList>
            <person name="Moore R.C."/>
            <person name="Stevens M.H.H."/>
        </authorList>
    </citation>
    <scope>NUCLEOTIDE SEQUENCE [GENOMIC DNA] OF 566-691</scope>
    <source>
        <strain>cv. Bla-10</strain>
        <strain>cv. Chi-1</strain>
        <strain>cv. Co-1</strain>
        <strain>cv. Columbia</strain>
        <strain>cv. Cvi-0</strain>
        <strain>cv. Da(1)-12</strain>
        <strain>cv. Di-G</strain>
        <strain>cv. Gr-3</strain>
        <strain>cv. Landsberg erecta</strain>
        <strain>cv. Li-3</strain>
        <strain>cv. Mt-0</strain>
        <strain>cv. PHW-1</strain>
        <strain>cv. PHW-32</strain>
        <strain>cv. Sha</strain>
    </source>
</reference>
<dbReference type="EMBL" id="AC009540">
    <property type="protein sequence ID" value="AAF00640.1"/>
    <property type="status" value="ALT_SEQ"/>
    <property type="molecule type" value="Genomic_DNA"/>
</dbReference>
<dbReference type="EMBL" id="CP002686">
    <property type="protein sequence ID" value="AEE73984.1"/>
    <property type="molecule type" value="Genomic_DNA"/>
</dbReference>
<dbReference type="EMBL" id="CP002686">
    <property type="protein sequence ID" value="AEE73985.1"/>
    <property type="molecule type" value="Genomic_DNA"/>
</dbReference>
<dbReference type="EMBL" id="CP002686">
    <property type="protein sequence ID" value="ANM64316.1"/>
    <property type="molecule type" value="Genomic_DNA"/>
</dbReference>
<dbReference type="EMBL" id="BT002375">
    <property type="protein sequence ID" value="AAO00735.1"/>
    <property type="molecule type" value="mRNA"/>
</dbReference>
<dbReference type="EMBL" id="FJ708717">
    <property type="protein sequence ID" value="ACN59312.1"/>
    <property type="molecule type" value="mRNA"/>
</dbReference>
<dbReference type="EMBL" id="AY084741">
    <property type="protein sequence ID" value="AAM61314.1"/>
    <property type="molecule type" value="mRNA"/>
</dbReference>
<dbReference type="EMBL" id="EU351279">
    <property type="protein sequence ID" value="ABY60312.1"/>
    <property type="molecule type" value="Genomic_DNA"/>
</dbReference>
<dbReference type="EMBL" id="EU351280">
    <property type="protein sequence ID" value="ABY60313.1"/>
    <property type="molecule type" value="Genomic_DNA"/>
</dbReference>
<dbReference type="EMBL" id="EU351281">
    <property type="protein sequence ID" value="ABY60314.1"/>
    <property type="molecule type" value="Genomic_DNA"/>
</dbReference>
<dbReference type="EMBL" id="EU351282">
    <property type="protein sequence ID" value="ABY60315.1"/>
    <property type="molecule type" value="Genomic_DNA"/>
</dbReference>
<dbReference type="EMBL" id="EU351283">
    <property type="protein sequence ID" value="ABY60316.1"/>
    <property type="molecule type" value="Genomic_DNA"/>
</dbReference>
<dbReference type="EMBL" id="EU351284">
    <property type="protein sequence ID" value="ABY60317.1"/>
    <property type="molecule type" value="Genomic_DNA"/>
</dbReference>
<dbReference type="EMBL" id="EU351285">
    <property type="protein sequence ID" value="ABY60318.1"/>
    <property type="molecule type" value="Genomic_DNA"/>
</dbReference>
<dbReference type="EMBL" id="EU351286">
    <property type="protein sequence ID" value="ABY60319.1"/>
    <property type="molecule type" value="Genomic_DNA"/>
</dbReference>
<dbReference type="EMBL" id="EU351287">
    <property type="protein sequence ID" value="ABY60320.1"/>
    <property type="molecule type" value="Genomic_DNA"/>
</dbReference>
<dbReference type="EMBL" id="EU351288">
    <property type="protein sequence ID" value="ABY60321.1"/>
    <property type="molecule type" value="Genomic_DNA"/>
</dbReference>
<dbReference type="EMBL" id="EU351289">
    <property type="protein sequence ID" value="ABY60322.1"/>
    <property type="molecule type" value="Genomic_DNA"/>
</dbReference>
<dbReference type="EMBL" id="EU351290">
    <property type="protein sequence ID" value="ABY60323.1"/>
    <property type="molecule type" value="Genomic_DNA"/>
</dbReference>
<dbReference type="EMBL" id="EU351291">
    <property type="protein sequence ID" value="ABY60324.1"/>
    <property type="molecule type" value="Genomic_DNA"/>
</dbReference>
<dbReference type="EMBL" id="EU351292">
    <property type="protein sequence ID" value="ABY60325.1"/>
    <property type="molecule type" value="Genomic_DNA"/>
</dbReference>
<dbReference type="RefSeq" id="NP_001189801.1">
    <molecule id="Q8LFN2-1"/>
    <property type="nucleotide sequence ID" value="NM_001202872.1"/>
</dbReference>
<dbReference type="RefSeq" id="NP_001326355.1">
    <molecule id="Q8LFN2-1"/>
    <property type="nucleotide sequence ID" value="NM_001337482.1"/>
</dbReference>
<dbReference type="RefSeq" id="NP_566213.1">
    <molecule id="Q8LFN2-1"/>
    <property type="nucleotide sequence ID" value="NM_111248.5"/>
</dbReference>
<dbReference type="SMR" id="Q8LFN2"/>
<dbReference type="BioGRID" id="6497">
    <property type="interactions" value="37"/>
</dbReference>
<dbReference type="FunCoup" id="Q8LFN2">
    <property type="interactions" value="537"/>
</dbReference>
<dbReference type="IntAct" id="Q8LFN2">
    <property type="interactions" value="35"/>
</dbReference>
<dbReference type="STRING" id="3702.Q8LFN2"/>
<dbReference type="GlyGen" id="Q8LFN2">
    <property type="glycosylation" value="6 sites"/>
</dbReference>
<dbReference type="iPTMnet" id="Q8LFN2"/>
<dbReference type="PaxDb" id="3702-AT3G03770.1"/>
<dbReference type="ProteomicsDB" id="232359">
    <molecule id="Q8LFN2-1"/>
</dbReference>
<dbReference type="EnsemblPlants" id="AT3G03770.1">
    <molecule id="Q8LFN2-1"/>
    <property type="protein sequence ID" value="AT3G03770.1"/>
    <property type="gene ID" value="AT3G03770"/>
</dbReference>
<dbReference type="EnsemblPlants" id="AT3G03770.2">
    <molecule id="Q8LFN2-1"/>
    <property type="protein sequence ID" value="AT3G03770.2"/>
    <property type="gene ID" value="AT3G03770"/>
</dbReference>
<dbReference type="EnsemblPlants" id="AT3G03770.3">
    <molecule id="Q8LFN2-1"/>
    <property type="protein sequence ID" value="AT3G03770.3"/>
    <property type="gene ID" value="AT3G03770"/>
</dbReference>
<dbReference type="GeneID" id="821164"/>
<dbReference type="Gramene" id="AT3G03770.1">
    <molecule id="Q8LFN2-1"/>
    <property type="protein sequence ID" value="AT3G03770.1"/>
    <property type="gene ID" value="AT3G03770"/>
</dbReference>
<dbReference type="Gramene" id="AT3G03770.2">
    <molecule id="Q8LFN2-1"/>
    <property type="protein sequence ID" value="AT3G03770.2"/>
    <property type="gene ID" value="AT3G03770"/>
</dbReference>
<dbReference type="Gramene" id="AT3G03770.3">
    <molecule id="Q8LFN2-1"/>
    <property type="protein sequence ID" value="AT3G03770.3"/>
    <property type="gene ID" value="AT3G03770"/>
</dbReference>
<dbReference type="KEGG" id="ath:AT3G03770"/>
<dbReference type="Araport" id="AT3G03770"/>
<dbReference type="TAIR" id="AT3G03770"/>
<dbReference type="eggNOG" id="ENOG502QQH1">
    <property type="taxonomic scope" value="Eukaryota"/>
</dbReference>
<dbReference type="HOGENOM" id="CLU_000288_108_0_1"/>
<dbReference type="InParanoid" id="Q8LFN2"/>
<dbReference type="OMA" id="RTIMQIC"/>
<dbReference type="OrthoDB" id="676979at2759"/>
<dbReference type="PhylomeDB" id="Q8LFN2"/>
<dbReference type="PRO" id="PR:Q8LFN2"/>
<dbReference type="Proteomes" id="UP000006548">
    <property type="component" value="Chromosome 3"/>
</dbReference>
<dbReference type="ExpressionAtlas" id="Q8LFN2">
    <property type="expression patterns" value="baseline and differential"/>
</dbReference>
<dbReference type="GO" id="GO:0005886">
    <property type="term" value="C:plasma membrane"/>
    <property type="evidence" value="ECO:0007669"/>
    <property type="project" value="UniProtKB-SubCell"/>
</dbReference>
<dbReference type="GO" id="GO:0005524">
    <property type="term" value="F:ATP binding"/>
    <property type="evidence" value="ECO:0007669"/>
    <property type="project" value="InterPro"/>
</dbReference>
<dbReference type="GO" id="GO:0004672">
    <property type="term" value="F:protein kinase activity"/>
    <property type="evidence" value="ECO:0007669"/>
    <property type="project" value="InterPro"/>
</dbReference>
<dbReference type="FunFam" id="3.80.10.10:FF:001001">
    <property type="entry name" value="Probable inactive leucine-rich repeat receptor-like protein kinase At3g03770"/>
    <property type="match status" value="1"/>
</dbReference>
<dbReference type="FunFam" id="1.10.510.10:FF:000431">
    <property type="entry name" value="Putative inactive leucine-rich repeat receptor-like protein kinase"/>
    <property type="match status" value="1"/>
</dbReference>
<dbReference type="FunFam" id="3.30.200.20:FF:000285">
    <property type="entry name" value="Putative inactive leucine-rich repeat receptor-like protein kinase"/>
    <property type="match status" value="1"/>
</dbReference>
<dbReference type="FunFam" id="3.80.10.10:FF:000155">
    <property type="entry name" value="Putative inactive leucine-rich repeat receptor-like protein kinase"/>
    <property type="match status" value="1"/>
</dbReference>
<dbReference type="Gene3D" id="3.30.200.20">
    <property type="entry name" value="Phosphorylase Kinase, domain 1"/>
    <property type="match status" value="1"/>
</dbReference>
<dbReference type="Gene3D" id="3.80.10.10">
    <property type="entry name" value="Ribonuclease Inhibitor"/>
    <property type="match status" value="3"/>
</dbReference>
<dbReference type="Gene3D" id="1.10.510.10">
    <property type="entry name" value="Transferase(Phosphotransferase) domain 1"/>
    <property type="match status" value="1"/>
</dbReference>
<dbReference type="InterPro" id="IPR011009">
    <property type="entry name" value="Kinase-like_dom_sf"/>
</dbReference>
<dbReference type="InterPro" id="IPR032675">
    <property type="entry name" value="LRR_dom_sf"/>
</dbReference>
<dbReference type="InterPro" id="IPR055414">
    <property type="entry name" value="LRR_R13L4/SHOC2-like"/>
</dbReference>
<dbReference type="InterPro" id="IPR051824">
    <property type="entry name" value="LRR_Rcpt-Like_S/T_Kinase"/>
</dbReference>
<dbReference type="InterPro" id="IPR000719">
    <property type="entry name" value="Prot_kinase_dom"/>
</dbReference>
<dbReference type="PANTHER" id="PTHR48006">
    <property type="entry name" value="LEUCINE-RICH REPEAT-CONTAINING PROTEIN DDB_G0281931-RELATED"/>
    <property type="match status" value="1"/>
</dbReference>
<dbReference type="PANTHER" id="PTHR48006:SF84">
    <property type="entry name" value="REPEAT TRANSMEMBRANE PROTEIN KINASE, PUTATIVE, EXPRESSED-RELATED"/>
    <property type="match status" value="1"/>
</dbReference>
<dbReference type="Pfam" id="PF23598">
    <property type="entry name" value="LRR_14"/>
    <property type="match status" value="1"/>
</dbReference>
<dbReference type="Pfam" id="PF00069">
    <property type="entry name" value="Pkinase"/>
    <property type="match status" value="1"/>
</dbReference>
<dbReference type="SUPFAM" id="SSF52058">
    <property type="entry name" value="L domain-like"/>
    <property type="match status" value="1"/>
</dbReference>
<dbReference type="SUPFAM" id="SSF56112">
    <property type="entry name" value="Protein kinase-like (PK-like)"/>
    <property type="match status" value="1"/>
</dbReference>
<dbReference type="PROSITE" id="PS50011">
    <property type="entry name" value="PROTEIN_KINASE_DOM"/>
    <property type="match status" value="1"/>
</dbReference>
<organism>
    <name type="scientific">Arabidopsis thaliana</name>
    <name type="common">Mouse-ear cress</name>
    <dbReference type="NCBI Taxonomy" id="3702"/>
    <lineage>
        <taxon>Eukaryota</taxon>
        <taxon>Viridiplantae</taxon>
        <taxon>Streptophyta</taxon>
        <taxon>Embryophyta</taxon>
        <taxon>Tracheophyta</taxon>
        <taxon>Spermatophyta</taxon>
        <taxon>Magnoliopsida</taxon>
        <taxon>eudicotyledons</taxon>
        <taxon>Gunneridae</taxon>
        <taxon>Pentapetalae</taxon>
        <taxon>rosids</taxon>
        <taxon>malvids</taxon>
        <taxon>Brassicales</taxon>
        <taxon>Brassicaceae</taxon>
        <taxon>Camelineae</taxon>
        <taxon>Arabidopsis</taxon>
    </lineage>
</organism>
<protein>
    <recommendedName>
        <fullName>Probable inactive leucine-rich repeat receptor-like protein kinase At3g03770</fullName>
    </recommendedName>
</protein>
<sequence>MEKLYCGMPLLLLVLLLASIDGSTQLQSSQSQTLLRLQQLLYYPKVLNSWNNYTDFCNSEPSPSLTVVCYEDSVTQLHIIGDNGTHMLPKSFSINSFVTTLVKLPDVKVLTFVSLGLWGWLPQKINRLSSLEILNVSSNFLFGPIPHELSSLATLQTLILDENMFSGELPDWIDSLPSLAVLSLRKNVLNGSLPSSLSSLSGLRVLALANNRFNGALPDLSHLTNLQVLDLEGNSFGPLFPRLSNKLVTLILSKNKFRSAVSAEEVSSLYQLQHLDLSYNTFVGPFPTSLMSLPAITYLNISHNKLTGRLSANLSCNSQLMFVDMSSNLLTGSLPTCLKPSSGTSRDVVYASNCLATTNEDQRPVSFCSNEALAVGILPQRRNKVSKVGIALGVTASILGVLLLAGALFVVLRRLNAKKTVTKSSPRLIRENASMGYTSKLLSDARYISQTMKLGGLGLPAYRTFSLEELEYATNNFESSAFMGEGSQGQIYRGRLKDGSFVAIRCLKMKKSCSTQNLMHHIELIAKLRHRHLVSVLGHCFECYLDDSTVSRMFFVFEYVPNGELRTWISDGHMGRLLTWEQRISVAIGVAKGIQFLHTGIVPGVYDNNLKMTDILLDNNLAAKLSSYNLPLLVEGLGKVGQVGSRSGPKGTPSIKDEDKIDIYDFGVILLELIVGRPLRAKSQVDVLKEQLQASISADDGARRSMVDPTVHRACSDQSLKTMMEICVRCLLKDPLERPSIEDVLWNLQFASQVQEGWLQNSNPSSNLGSPSPAASSLPPPSRLHVTTLESPRDSGCEEHER</sequence>
<comment type="interaction">
    <interactant intactId="EBI-17121194">
        <id>Q8LFN2</id>
    </interactant>
    <interactant intactId="EBI-16934827">
        <id>Q8W4S5</id>
        <label>At5g63710</label>
    </interactant>
    <organismsDiffer>false</organismsDiffer>
    <experiments>2</experiments>
</comment>
<comment type="subcellular location">
    <subcellularLocation>
        <location evidence="1">Cell membrane</location>
        <topology evidence="1">Single-pass type I membrane protein</topology>
    </subcellularLocation>
</comment>
<comment type="alternative products">
    <event type="alternative splicing"/>
    <isoform>
        <id>Q8LFN2-1</id>
        <name>1</name>
        <sequence type="displayed"/>
    </isoform>
    <isoform>
        <id>Q8LFN2-2</id>
        <name>2</name>
        <sequence type="described" ref="VSP_040166 VSP_040167"/>
    </isoform>
</comment>
<comment type="domain">
    <text>The protein kinase domain is predicted to be catalytically inactive.</text>
</comment>
<comment type="similarity">
    <text evidence="3">Belongs to the protein kinase superfamily. Ser/Thr protein kinase family.</text>
</comment>
<comment type="sequence caution" evidence="6">
    <conflict type="erroneous gene model prediction">
        <sequence resource="EMBL-CDS" id="AAF00640"/>
    </conflict>
</comment>
<gene>
    <name type="ordered locus">At3g03770</name>
    <name type="ORF">F20H23.20</name>
</gene>
<keyword id="KW-0025">Alternative splicing</keyword>
<keyword id="KW-1003">Cell membrane</keyword>
<keyword id="KW-0325">Glycoprotein</keyword>
<keyword id="KW-0433">Leucine-rich repeat</keyword>
<keyword id="KW-0472">Membrane</keyword>
<keyword id="KW-0675">Receptor</keyword>
<keyword id="KW-1185">Reference proteome</keyword>
<keyword id="KW-0677">Repeat</keyword>
<keyword id="KW-0732">Signal</keyword>
<keyword id="KW-0812">Transmembrane</keyword>
<keyword id="KW-1133">Transmembrane helix</keyword>
<proteinExistence type="evidence at protein level"/>
<evidence type="ECO:0000250" key="1"/>
<evidence type="ECO:0000255" key="2"/>
<evidence type="ECO:0000255" key="3">
    <source>
        <dbReference type="PROSITE-ProRule" id="PRU00159"/>
    </source>
</evidence>
<evidence type="ECO:0000256" key="4">
    <source>
        <dbReference type="SAM" id="MobiDB-lite"/>
    </source>
</evidence>
<evidence type="ECO:0000303" key="5">
    <source>
    </source>
</evidence>
<evidence type="ECO:0000305" key="6"/>
<name>Y3037_ARATH</name>
<feature type="signal peptide" evidence="2">
    <location>
        <begin position="1"/>
        <end position="26"/>
    </location>
</feature>
<feature type="chain" id="PRO_0000401341" description="Probable inactive leucine-rich repeat receptor-like protein kinase At3g03770">
    <location>
        <begin position="27"/>
        <end position="802"/>
    </location>
</feature>
<feature type="topological domain" description="Extracellular" evidence="2">
    <location>
        <begin position="27"/>
        <end position="391"/>
    </location>
</feature>
<feature type="transmembrane region" description="Helical" evidence="2">
    <location>
        <begin position="392"/>
        <end position="412"/>
    </location>
</feature>
<feature type="topological domain" description="Cytoplasmic" evidence="2">
    <location>
        <begin position="413"/>
        <end position="802"/>
    </location>
</feature>
<feature type="repeat" description="LRR 1">
    <location>
        <begin position="71"/>
        <end position="94"/>
    </location>
</feature>
<feature type="repeat" description="LRR 2">
    <location>
        <begin position="104"/>
        <end position="128"/>
    </location>
</feature>
<feature type="repeat" description="LRR 3">
    <location>
        <begin position="129"/>
        <end position="152"/>
    </location>
</feature>
<feature type="repeat" description="LRR 4">
    <location>
        <begin position="153"/>
        <end position="176"/>
    </location>
</feature>
<feature type="repeat" description="LRR 5">
    <location>
        <begin position="177"/>
        <end position="200"/>
    </location>
</feature>
<feature type="repeat" description="LRR 6">
    <location>
        <begin position="201"/>
        <end position="225"/>
    </location>
</feature>
<feature type="repeat" description="LRR 7">
    <location>
        <begin position="227"/>
        <end position="244"/>
    </location>
</feature>
<feature type="repeat" description="LRR 8">
    <location>
        <begin position="245"/>
        <end position="268"/>
    </location>
</feature>
<feature type="repeat" description="LRR 9">
    <location>
        <begin position="269"/>
        <end position="293"/>
    </location>
</feature>
<feature type="repeat" description="LRR 10">
    <location>
        <begin position="294"/>
        <end position="317"/>
    </location>
</feature>
<feature type="repeat" description="LRR 11">
    <location>
        <begin position="319"/>
        <end position="341"/>
    </location>
</feature>
<feature type="domain" description="Protein kinase" evidence="3">
    <location>
        <begin position="477"/>
        <end position="759"/>
    </location>
</feature>
<feature type="region of interest" description="Disordered" evidence="4">
    <location>
        <begin position="761"/>
        <end position="802"/>
    </location>
</feature>
<feature type="compositionally biased region" description="Low complexity" evidence="4">
    <location>
        <begin position="762"/>
        <end position="777"/>
    </location>
</feature>
<feature type="compositionally biased region" description="Basic and acidic residues" evidence="4">
    <location>
        <begin position="791"/>
        <end position="802"/>
    </location>
</feature>
<feature type="glycosylation site" description="N-linked (GlcNAc...) asparagine" evidence="2">
    <location>
        <position position="52"/>
    </location>
</feature>
<feature type="glycosylation site" description="N-linked (GlcNAc...) asparagine" evidence="2">
    <location>
        <position position="83"/>
    </location>
</feature>
<feature type="glycosylation site" description="N-linked (GlcNAc...) asparagine" evidence="2">
    <location>
        <position position="135"/>
    </location>
</feature>
<feature type="glycosylation site" description="N-linked (GlcNAc...) asparagine" evidence="2">
    <location>
        <position position="190"/>
    </location>
</feature>
<feature type="glycosylation site" description="N-linked (GlcNAc...) asparagine" evidence="2">
    <location>
        <position position="300"/>
    </location>
</feature>
<feature type="glycosylation site" description="N-linked (GlcNAc...) asparagine" evidence="2">
    <location>
        <position position="313"/>
    </location>
</feature>
<feature type="splice variant" id="VSP_040166" description="In isoform 2." evidence="5">
    <original>GQVGSRSGPKGT</original>
    <variation>NDDVKSSNVFVS</variation>
    <location>
        <begin position="641"/>
        <end position="652"/>
    </location>
</feature>
<feature type="splice variant" id="VSP_040167" description="In isoform 2." evidence="5">
    <location>
        <begin position="653"/>
        <end position="802"/>
    </location>
</feature>
<feature type="sequence conflict" description="In Ref. 3; AAO00735." evidence="6" ref="3">
    <original>N</original>
    <variation>D</variation>
    <location>
        <position position="562"/>
    </location>
</feature>
<accession>Q8LFN2</accession>
<accession>B0FUP8</accession>
<accession>Q8GUM9</accession>
<accession>Q9SRV4</accession>